<proteinExistence type="inferred from homology"/>
<evidence type="ECO:0000255" key="1">
    <source>
        <dbReference type="HAMAP-Rule" id="MF_00254"/>
    </source>
</evidence>
<sequence length="302" mass="34331">MSDSRRVPITFQGLIQTLNQYWAEQGCVLIQPLDLEVGAGTFHPATFLRALGPEPWNAAYVQPSRRPTDGRYGENPNRLQRYYQYQVAMKPNPDNIQDLYLGSLQALGIDPLVHDLRFVEDNWESPTLGAWGVGWEVWLNGMEVTQFTYFQQAGGLECKPVLGEITYGLERLCMYLQRCDNVYALVWTYGPDGAAVTYGDVYHQNEVEQSTYNFEHANVAELFHRFDACEAEAKHLVEVGLPLPAYEQVTKASHAFNLLDARRAISVTERQRYILRVRALAQGVAQAYYAQREKLGFPGVKQ</sequence>
<gene>
    <name evidence="1" type="primary">glyQ</name>
    <name type="ordered locus">PXO_03831</name>
</gene>
<accession>B2SII2</accession>
<organism>
    <name type="scientific">Xanthomonas oryzae pv. oryzae (strain PXO99A)</name>
    <dbReference type="NCBI Taxonomy" id="360094"/>
    <lineage>
        <taxon>Bacteria</taxon>
        <taxon>Pseudomonadati</taxon>
        <taxon>Pseudomonadota</taxon>
        <taxon>Gammaproteobacteria</taxon>
        <taxon>Lysobacterales</taxon>
        <taxon>Lysobacteraceae</taxon>
        <taxon>Xanthomonas</taxon>
    </lineage>
</organism>
<comment type="catalytic activity">
    <reaction evidence="1">
        <text>tRNA(Gly) + glycine + ATP = glycyl-tRNA(Gly) + AMP + diphosphate</text>
        <dbReference type="Rhea" id="RHEA:16013"/>
        <dbReference type="Rhea" id="RHEA-COMP:9664"/>
        <dbReference type="Rhea" id="RHEA-COMP:9683"/>
        <dbReference type="ChEBI" id="CHEBI:30616"/>
        <dbReference type="ChEBI" id="CHEBI:33019"/>
        <dbReference type="ChEBI" id="CHEBI:57305"/>
        <dbReference type="ChEBI" id="CHEBI:78442"/>
        <dbReference type="ChEBI" id="CHEBI:78522"/>
        <dbReference type="ChEBI" id="CHEBI:456215"/>
        <dbReference type="EC" id="6.1.1.14"/>
    </reaction>
</comment>
<comment type="subunit">
    <text evidence="1">Tetramer of two alpha and two beta subunits.</text>
</comment>
<comment type="subcellular location">
    <subcellularLocation>
        <location evidence="1">Cytoplasm</location>
    </subcellularLocation>
</comment>
<comment type="similarity">
    <text evidence="1">Belongs to the class-II aminoacyl-tRNA synthetase family.</text>
</comment>
<dbReference type="EC" id="6.1.1.14" evidence="1"/>
<dbReference type="EMBL" id="CP000967">
    <property type="protein sequence ID" value="ACD57043.1"/>
    <property type="molecule type" value="Genomic_DNA"/>
</dbReference>
<dbReference type="RefSeq" id="WP_012443796.1">
    <property type="nucleotide sequence ID" value="NC_010717.2"/>
</dbReference>
<dbReference type="SMR" id="B2SII2"/>
<dbReference type="KEGG" id="xop:PXO_03831"/>
<dbReference type="eggNOG" id="COG0752">
    <property type="taxonomic scope" value="Bacteria"/>
</dbReference>
<dbReference type="HOGENOM" id="CLU_057066_1_0_6"/>
<dbReference type="Proteomes" id="UP000001740">
    <property type="component" value="Chromosome"/>
</dbReference>
<dbReference type="GO" id="GO:0005829">
    <property type="term" value="C:cytosol"/>
    <property type="evidence" value="ECO:0007669"/>
    <property type="project" value="TreeGrafter"/>
</dbReference>
<dbReference type="GO" id="GO:0005524">
    <property type="term" value="F:ATP binding"/>
    <property type="evidence" value="ECO:0007669"/>
    <property type="project" value="UniProtKB-UniRule"/>
</dbReference>
<dbReference type="GO" id="GO:0004820">
    <property type="term" value="F:glycine-tRNA ligase activity"/>
    <property type="evidence" value="ECO:0007669"/>
    <property type="project" value="UniProtKB-UniRule"/>
</dbReference>
<dbReference type="GO" id="GO:0006426">
    <property type="term" value="P:glycyl-tRNA aminoacylation"/>
    <property type="evidence" value="ECO:0007669"/>
    <property type="project" value="UniProtKB-UniRule"/>
</dbReference>
<dbReference type="CDD" id="cd00733">
    <property type="entry name" value="GlyRS_alpha_core"/>
    <property type="match status" value="1"/>
</dbReference>
<dbReference type="FunFam" id="3.30.930.10:FF:000006">
    <property type="entry name" value="Glycine--tRNA ligase alpha subunit"/>
    <property type="match status" value="1"/>
</dbReference>
<dbReference type="Gene3D" id="3.30.930.10">
    <property type="entry name" value="Bira Bifunctional Protein, Domain 2"/>
    <property type="match status" value="1"/>
</dbReference>
<dbReference type="Gene3D" id="1.20.58.180">
    <property type="entry name" value="Class II aaRS and biotin synthetases, domain 2"/>
    <property type="match status" value="1"/>
</dbReference>
<dbReference type="HAMAP" id="MF_00254">
    <property type="entry name" value="Gly_tRNA_synth_alpha"/>
    <property type="match status" value="1"/>
</dbReference>
<dbReference type="InterPro" id="IPR045864">
    <property type="entry name" value="aa-tRNA-synth_II/BPL/LPL"/>
</dbReference>
<dbReference type="InterPro" id="IPR006194">
    <property type="entry name" value="Gly-tRNA-synth_heterodimer"/>
</dbReference>
<dbReference type="InterPro" id="IPR002310">
    <property type="entry name" value="Gly-tRNA_ligase_asu"/>
</dbReference>
<dbReference type="NCBIfam" id="TIGR00388">
    <property type="entry name" value="glyQ"/>
    <property type="match status" value="1"/>
</dbReference>
<dbReference type="NCBIfam" id="NF006827">
    <property type="entry name" value="PRK09348.1"/>
    <property type="match status" value="1"/>
</dbReference>
<dbReference type="PANTHER" id="PTHR30075:SF2">
    <property type="entry name" value="GLYCINE--TRNA LIGASE, CHLOROPLASTIC_MITOCHONDRIAL 2"/>
    <property type="match status" value="1"/>
</dbReference>
<dbReference type="PANTHER" id="PTHR30075">
    <property type="entry name" value="GLYCYL-TRNA SYNTHETASE"/>
    <property type="match status" value="1"/>
</dbReference>
<dbReference type="Pfam" id="PF02091">
    <property type="entry name" value="tRNA-synt_2e"/>
    <property type="match status" value="1"/>
</dbReference>
<dbReference type="PRINTS" id="PR01044">
    <property type="entry name" value="TRNASYNTHGA"/>
</dbReference>
<dbReference type="SUPFAM" id="SSF55681">
    <property type="entry name" value="Class II aaRS and biotin synthetases"/>
    <property type="match status" value="1"/>
</dbReference>
<dbReference type="PROSITE" id="PS50861">
    <property type="entry name" value="AA_TRNA_LIGASE_II_GLYAB"/>
    <property type="match status" value="1"/>
</dbReference>
<protein>
    <recommendedName>
        <fullName evidence="1">Glycine--tRNA ligase alpha subunit</fullName>
        <ecNumber evidence="1">6.1.1.14</ecNumber>
    </recommendedName>
    <alternativeName>
        <fullName evidence="1">Glycyl-tRNA synthetase alpha subunit</fullName>
        <shortName evidence="1">GlyRS</shortName>
    </alternativeName>
</protein>
<feature type="chain" id="PRO_1000101246" description="Glycine--tRNA ligase alpha subunit">
    <location>
        <begin position="1"/>
        <end position="302"/>
    </location>
</feature>
<name>SYGA_XANOP</name>
<keyword id="KW-0030">Aminoacyl-tRNA synthetase</keyword>
<keyword id="KW-0067">ATP-binding</keyword>
<keyword id="KW-0963">Cytoplasm</keyword>
<keyword id="KW-0436">Ligase</keyword>
<keyword id="KW-0547">Nucleotide-binding</keyword>
<keyword id="KW-0648">Protein biosynthesis</keyword>
<reference key="1">
    <citation type="journal article" date="2008" name="BMC Genomics">
        <title>Genome sequence and rapid evolution of the rice pathogen Xanthomonas oryzae pv. oryzae PXO99A.</title>
        <authorList>
            <person name="Salzberg S.L."/>
            <person name="Sommer D.D."/>
            <person name="Schatz M.C."/>
            <person name="Phillippy A.M."/>
            <person name="Rabinowicz P.D."/>
            <person name="Tsuge S."/>
            <person name="Furutani A."/>
            <person name="Ochiai H."/>
            <person name="Delcher A.L."/>
            <person name="Kelley D."/>
            <person name="Madupu R."/>
            <person name="Puiu D."/>
            <person name="Radune D."/>
            <person name="Shumway M."/>
            <person name="Trapnell C."/>
            <person name="Aparna G."/>
            <person name="Jha G."/>
            <person name="Pandey A."/>
            <person name="Patil P.B."/>
            <person name="Ishihara H."/>
            <person name="Meyer D.F."/>
            <person name="Szurek B."/>
            <person name="Verdier V."/>
            <person name="Koebnik R."/>
            <person name="Dow J.M."/>
            <person name="Ryan R.P."/>
            <person name="Hirata H."/>
            <person name="Tsuyumu S."/>
            <person name="Won Lee S."/>
            <person name="Seo Y.-S."/>
            <person name="Sriariyanum M."/>
            <person name="Ronald P.C."/>
            <person name="Sonti R.V."/>
            <person name="Van Sluys M.-A."/>
            <person name="Leach J.E."/>
            <person name="White F.F."/>
            <person name="Bogdanove A.J."/>
        </authorList>
    </citation>
    <scope>NUCLEOTIDE SEQUENCE [LARGE SCALE GENOMIC DNA]</scope>
    <source>
        <strain>PXO99A</strain>
    </source>
</reference>